<proteinExistence type="inferred from homology"/>
<accession>Q469Y2</accession>
<sequence length="633" mass="70820">MEKYDYSELGLKAGLEIHQQLDSKEKLFCRCPTLIRDVKESDFEFFRYLRATESEMGEKDRAAVEQTKIRRKYIYKAYDTTCLIENDEEPPRELNKEALDISLGIAKLFNMKPVDQMHVMRKIVVDGSNTSGFQRTAFLASDGFIETSQGLCGIDSLCVEEEAAQKIEEIGDSIIYSLDRLGIPLVEIATAPDIKSPRHAREVAEQIGMFLRSTGKVKRGLGTIRQDVNVSIAEGARVEIKGVQALDLIEDIIRREVERQLNLLFIRQELIERKAFVCEEIYDITGLFVDTKSKVLQKGVKKGAVLAAHLKKFEGLVGKEVQPGRRLGTEFSDRAKTAGVGGIFHTDELPNYGITEKEVKTVRDAIGASAGDAVIMVADEPEKARLAIEAVIQRAKEAMEGIPEETRKALPDGNTAYMRPLPGAARMYPETDVPQIEISQEYFDSIEIPELLTERAKRFVSENGLNQELAEKIAYSKHLPLFEELIETYGKDENVNSTLIARTLVGIVPEIRRNGVETENLTDEHFKGLFVAISNQEIAKEAIQDLLAALAEEPELSTPEAISNLGLSAFDPEEVENFIKKTVREREDFIKEKGPAALGPLMGIVMKEYRGTVDGKILSQMLKKELDSFINQG</sequence>
<reference key="1">
    <citation type="journal article" date="2006" name="J. Bacteriol.">
        <title>The Methanosarcina barkeri genome: comparative analysis with Methanosarcina acetivorans and Methanosarcina mazei reveals extensive rearrangement within methanosarcinal genomes.</title>
        <authorList>
            <person name="Maeder D.L."/>
            <person name="Anderson I."/>
            <person name="Brettin T.S."/>
            <person name="Bruce D.C."/>
            <person name="Gilna P."/>
            <person name="Han C.S."/>
            <person name="Lapidus A."/>
            <person name="Metcalf W.W."/>
            <person name="Saunders E."/>
            <person name="Tapia R."/>
            <person name="Sowers K.R."/>
        </authorList>
    </citation>
    <scope>NUCLEOTIDE SEQUENCE [LARGE SCALE GENOMIC DNA]</scope>
    <source>
        <strain>Fusaro / DSM 804</strain>
    </source>
</reference>
<gene>
    <name evidence="1" type="primary">gatE</name>
    <name type="ordered locus">Mbar_A2389</name>
</gene>
<feature type="chain" id="PRO_1000025477" description="Glutamyl-tRNA(Gln) amidotransferase subunit E">
    <location>
        <begin position="1"/>
        <end position="633"/>
    </location>
</feature>
<dbReference type="EC" id="6.3.5.-" evidence="1"/>
<dbReference type="EMBL" id="CP000099">
    <property type="protein sequence ID" value="AAZ71310.1"/>
    <property type="molecule type" value="Genomic_DNA"/>
</dbReference>
<dbReference type="SMR" id="Q469Y2"/>
<dbReference type="STRING" id="269797.Mbar_A2389"/>
<dbReference type="PaxDb" id="269797-Mbar_A2389"/>
<dbReference type="KEGG" id="mba:Mbar_A2389"/>
<dbReference type="eggNOG" id="arCOG01719">
    <property type="taxonomic scope" value="Archaea"/>
</dbReference>
<dbReference type="HOGENOM" id="CLU_030702_0_0_2"/>
<dbReference type="OrthoDB" id="7316at2157"/>
<dbReference type="GO" id="GO:0005737">
    <property type="term" value="C:cytoplasm"/>
    <property type="evidence" value="ECO:0007669"/>
    <property type="project" value="InterPro"/>
</dbReference>
<dbReference type="GO" id="GO:0004812">
    <property type="term" value="F:aminoacyl-tRNA ligase activity"/>
    <property type="evidence" value="ECO:0007669"/>
    <property type="project" value="InterPro"/>
</dbReference>
<dbReference type="GO" id="GO:0005524">
    <property type="term" value="F:ATP binding"/>
    <property type="evidence" value="ECO:0007669"/>
    <property type="project" value="UniProtKB-KW"/>
</dbReference>
<dbReference type="GO" id="GO:0050567">
    <property type="term" value="F:glutaminyl-tRNA synthase (glutamine-hydrolyzing) activity"/>
    <property type="evidence" value="ECO:0007669"/>
    <property type="project" value="UniProtKB-UniRule"/>
</dbReference>
<dbReference type="GO" id="GO:0070681">
    <property type="term" value="P:glutaminyl-tRNAGln biosynthesis via transamidation"/>
    <property type="evidence" value="ECO:0007669"/>
    <property type="project" value="TreeGrafter"/>
</dbReference>
<dbReference type="GO" id="GO:0006412">
    <property type="term" value="P:translation"/>
    <property type="evidence" value="ECO:0007669"/>
    <property type="project" value="UniProtKB-UniRule"/>
</dbReference>
<dbReference type="FunFam" id="1.10.10.410:FF:000003">
    <property type="entry name" value="Glutamyl-tRNA(Gln) amidotransferase subunit E"/>
    <property type="match status" value="1"/>
</dbReference>
<dbReference type="FunFam" id="3.30.1360.30:FF:000003">
    <property type="entry name" value="Glutamyl-tRNA(Gln) amidotransferase subunit E"/>
    <property type="match status" value="1"/>
</dbReference>
<dbReference type="Gene3D" id="1.10.10.410">
    <property type="match status" value="1"/>
</dbReference>
<dbReference type="Gene3D" id="3.30.1360.30">
    <property type="entry name" value="GAD-like domain"/>
    <property type="match status" value="1"/>
</dbReference>
<dbReference type="Gene3D" id="1.10.150.380">
    <property type="entry name" value="GatB domain, N-terminal subdomain"/>
    <property type="match status" value="1"/>
</dbReference>
<dbReference type="HAMAP" id="MF_00588">
    <property type="entry name" value="GatE"/>
    <property type="match status" value="1"/>
</dbReference>
<dbReference type="InterPro" id="IPR017959">
    <property type="entry name" value="Asn/Gln-tRNA_amidoTrfase_suB/E"/>
</dbReference>
<dbReference type="InterPro" id="IPR006075">
    <property type="entry name" value="Asn/Gln-tRNA_Trfase_suB/E_cat"/>
</dbReference>
<dbReference type="InterPro" id="IPR018027">
    <property type="entry name" value="Asn/Gln_amidotransferase"/>
</dbReference>
<dbReference type="InterPro" id="IPR003789">
    <property type="entry name" value="Asn/Gln_tRNA_amidoTrase-B-like"/>
</dbReference>
<dbReference type="InterPro" id="IPR004115">
    <property type="entry name" value="GAD-like_sf"/>
</dbReference>
<dbReference type="InterPro" id="IPR029351">
    <property type="entry name" value="GAD_dom"/>
</dbReference>
<dbReference type="InterPro" id="IPR042114">
    <property type="entry name" value="GatB_C_1"/>
</dbReference>
<dbReference type="InterPro" id="IPR023168">
    <property type="entry name" value="GatB_Yqey_C_2"/>
</dbReference>
<dbReference type="InterPro" id="IPR004414">
    <property type="entry name" value="GatE"/>
</dbReference>
<dbReference type="InterPro" id="IPR017958">
    <property type="entry name" value="Gln-tRNA_amidoTrfase_suB_CS"/>
</dbReference>
<dbReference type="InterPro" id="IPR014746">
    <property type="entry name" value="Gln_synth/guanido_kin_cat_dom"/>
</dbReference>
<dbReference type="NCBIfam" id="TIGR00134">
    <property type="entry name" value="gatE_arch"/>
    <property type="match status" value="1"/>
</dbReference>
<dbReference type="NCBIfam" id="NF003107">
    <property type="entry name" value="PRK04028.1"/>
    <property type="match status" value="1"/>
</dbReference>
<dbReference type="PANTHER" id="PTHR11659">
    <property type="entry name" value="GLUTAMYL-TRNA GLN AMIDOTRANSFERASE SUBUNIT B MITOCHONDRIAL AND PROKARYOTIC PET112-RELATED"/>
    <property type="match status" value="1"/>
</dbReference>
<dbReference type="PANTHER" id="PTHR11659:SF2">
    <property type="entry name" value="GLUTAMYL-TRNA(GLN) AMIDOTRANSFERASE SUBUNIT E"/>
    <property type="match status" value="1"/>
</dbReference>
<dbReference type="Pfam" id="PF02938">
    <property type="entry name" value="GAD"/>
    <property type="match status" value="1"/>
</dbReference>
<dbReference type="Pfam" id="PF02934">
    <property type="entry name" value="GatB_N"/>
    <property type="match status" value="1"/>
</dbReference>
<dbReference type="Pfam" id="PF02637">
    <property type="entry name" value="GatB_Yqey"/>
    <property type="match status" value="1"/>
</dbReference>
<dbReference type="SMART" id="SM00845">
    <property type="entry name" value="GatB_Yqey"/>
    <property type="match status" value="1"/>
</dbReference>
<dbReference type="SUPFAM" id="SSF55261">
    <property type="entry name" value="GAD domain-like"/>
    <property type="match status" value="1"/>
</dbReference>
<dbReference type="SUPFAM" id="SSF89095">
    <property type="entry name" value="GatB/YqeY motif"/>
    <property type="match status" value="1"/>
</dbReference>
<dbReference type="SUPFAM" id="SSF55931">
    <property type="entry name" value="Glutamine synthetase/guanido kinase"/>
    <property type="match status" value="1"/>
</dbReference>
<dbReference type="PROSITE" id="PS01234">
    <property type="entry name" value="GATB"/>
    <property type="match status" value="1"/>
</dbReference>
<comment type="function">
    <text evidence="1">Allows the formation of correctly charged Gln-tRNA(Gln) through the transamidation of misacylated Glu-tRNA(Gln) in organisms which lack glutaminyl-tRNA synthetase. The reaction takes place in the presence of glutamine and ATP through an activated gamma-phospho-Glu-tRNA(Gln). The GatDE system is specific for glutamate and does not act on aspartate.</text>
</comment>
<comment type="catalytic activity">
    <reaction evidence="1">
        <text>L-glutamyl-tRNA(Gln) + L-glutamine + ATP + H2O = L-glutaminyl-tRNA(Gln) + L-glutamate + ADP + phosphate + H(+)</text>
        <dbReference type="Rhea" id="RHEA:17521"/>
        <dbReference type="Rhea" id="RHEA-COMP:9681"/>
        <dbReference type="Rhea" id="RHEA-COMP:9684"/>
        <dbReference type="ChEBI" id="CHEBI:15377"/>
        <dbReference type="ChEBI" id="CHEBI:15378"/>
        <dbReference type="ChEBI" id="CHEBI:29985"/>
        <dbReference type="ChEBI" id="CHEBI:30616"/>
        <dbReference type="ChEBI" id="CHEBI:43474"/>
        <dbReference type="ChEBI" id="CHEBI:58359"/>
        <dbReference type="ChEBI" id="CHEBI:78520"/>
        <dbReference type="ChEBI" id="CHEBI:78521"/>
        <dbReference type="ChEBI" id="CHEBI:456216"/>
    </reaction>
</comment>
<comment type="subunit">
    <text evidence="1">Heterodimer of GatD and GatE.</text>
</comment>
<comment type="similarity">
    <text evidence="1">Belongs to the GatB/GatE family. GatE subfamily.</text>
</comment>
<evidence type="ECO:0000255" key="1">
    <source>
        <dbReference type="HAMAP-Rule" id="MF_00588"/>
    </source>
</evidence>
<name>GATE_METBF</name>
<keyword id="KW-0067">ATP-binding</keyword>
<keyword id="KW-0436">Ligase</keyword>
<keyword id="KW-0547">Nucleotide-binding</keyword>
<keyword id="KW-0648">Protein biosynthesis</keyword>
<protein>
    <recommendedName>
        <fullName evidence="1">Glutamyl-tRNA(Gln) amidotransferase subunit E</fullName>
        <shortName evidence="1">Glu-ADT subunit E</shortName>
        <ecNumber evidence="1">6.3.5.-</ecNumber>
    </recommendedName>
</protein>
<organism>
    <name type="scientific">Methanosarcina barkeri (strain Fusaro / DSM 804)</name>
    <dbReference type="NCBI Taxonomy" id="269797"/>
    <lineage>
        <taxon>Archaea</taxon>
        <taxon>Methanobacteriati</taxon>
        <taxon>Methanobacteriota</taxon>
        <taxon>Stenosarchaea group</taxon>
        <taxon>Methanomicrobia</taxon>
        <taxon>Methanosarcinales</taxon>
        <taxon>Methanosarcinaceae</taxon>
        <taxon>Methanosarcina</taxon>
    </lineage>
</organism>